<gene>
    <name evidence="1" type="primary">plsY</name>
    <name type="ordered locus">RHOS4_26190</name>
    <name type="ORF">RSP_1004</name>
</gene>
<name>PLSY_CERS4</name>
<organism>
    <name type="scientific">Cereibacter sphaeroides (strain ATCC 17023 / DSM 158 / JCM 6121 / CCUG 31486 / LMG 2827 / NBRC 12203 / NCIMB 8253 / ATH 2.4.1.)</name>
    <name type="common">Rhodobacter sphaeroides</name>
    <dbReference type="NCBI Taxonomy" id="272943"/>
    <lineage>
        <taxon>Bacteria</taxon>
        <taxon>Pseudomonadati</taxon>
        <taxon>Pseudomonadota</taxon>
        <taxon>Alphaproteobacteria</taxon>
        <taxon>Rhodobacterales</taxon>
        <taxon>Paracoccaceae</taxon>
        <taxon>Cereibacter</taxon>
    </lineage>
</organism>
<proteinExistence type="inferred from homology"/>
<comment type="function">
    <text evidence="1">Catalyzes the transfer of an acyl group from acyl-phosphate (acyl-PO(4)) to glycerol-3-phosphate (G3P) to form lysophosphatidic acid (LPA). This enzyme utilizes acyl-phosphate as fatty acyl donor, but not acyl-CoA or acyl-ACP.</text>
</comment>
<comment type="catalytic activity">
    <reaction evidence="1">
        <text>an acyl phosphate + sn-glycerol 3-phosphate = a 1-acyl-sn-glycero-3-phosphate + phosphate</text>
        <dbReference type="Rhea" id="RHEA:34075"/>
        <dbReference type="ChEBI" id="CHEBI:43474"/>
        <dbReference type="ChEBI" id="CHEBI:57597"/>
        <dbReference type="ChEBI" id="CHEBI:57970"/>
        <dbReference type="ChEBI" id="CHEBI:59918"/>
        <dbReference type="EC" id="2.3.1.275"/>
    </reaction>
</comment>
<comment type="pathway">
    <text evidence="1">Lipid metabolism; phospholipid metabolism.</text>
</comment>
<comment type="subunit">
    <text evidence="1">Probably interacts with PlsX.</text>
</comment>
<comment type="subcellular location">
    <subcellularLocation>
        <location evidence="1">Cell inner membrane</location>
        <topology evidence="1">Multi-pass membrane protein</topology>
    </subcellularLocation>
</comment>
<comment type="similarity">
    <text evidence="1">Belongs to the PlsY family.</text>
</comment>
<protein>
    <recommendedName>
        <fullName evidence="1">Glycerol-3-phosphate acyltransferase</fullName>
    </recommendedName>
    <alternativeName>
        <fullName evidence="1">Acyl-PO4 G3P acyltransferase</fullName>
    </alternativeName>
    <alternativeName>
        <fullName evidence="1">Acyl-phosphate--glycerol-3-phosphate acyltransferase</fullName>
    </alternativeName>
    <alternativeName>
        <fullName evidence="1">G3P acyltransferase</fullName>
        <shortName evidence="1">GPAT</shortName>
        <ecNumber evidence="1">2.3.1.275</ecNumber>
    </alternativeName>
    <alternativeName>
        <fullName evidence="1">Lysophosphatidic acid synthase</fullName>
        <shortName evidence="1">LPA synthase</shortName>
    </alternativeName>
</protein>
<feature type="chain" id="PRO_0000250323" description="Glycerol-3-phosphate acyltransferase">
    <location>
        <begin position="1"/>
        <end position="201"/>
    </location>
</feature>
<feature type="transmembrane region" description="Helical" evidence="1">
    <location>
        <begin position="10"/>
        <end position="30"/>
    </location>
</feature>
<feature type="transmembrane region" description="Helical" evidence="1">
    <location>
        <begin position="59"/>
        <end position="79"/>
    </location>
</feature>
<feature type="transmembrane region" description="Helical" evidence="1">
    <location>
        <begin position="87"/>
        <end position="107"/>
    </location>
</feature>
<feature type="transmembrane region" description="Helical" evidence="1">
    <location>
        <begin position="116"/>
        <end position="136"/>
    </location>
</feature>
<feature type="transmembrane region" description="Helical" evidence="1">
    <location>
        <begin position="161"/>
        <end position="181"/>
    </location>
</feature>
<sequence length="201" mass="20589">MPAIESGLWALILTGVLGYLLGSIPFGIVITRALGLGDLRKIGSGNIGATNVLRTGNKPAALATLLLDSGKGAIAVLIARAAVGEDAAQLAAFTSFLGHLFPVWLGFRGGKGVATFLGTLLALAWPVGLACCLTWLATAALGRISSLSALVAAASGVLWMILLGYGQMAALGAVLAVLIFIRHHANIRRILAGTEPRIGKK</sequence>
<dbReference type="EC" id="2.3.1.275" evidence="1"/>
<dbReference type="EMBL" id="CP000143">
    <property type="protein sequence ID" value="ABA80187.1"/>
    <property type="molecule type" value="Genomic_DNA"/>
</dbReference>
<dbReference type="RefSeq" id="WP_009563048.1">
    <property type="nucleotide sequence ID" value="NZ_CP030271.1"/>
</dbReference>
<dbReference type="RefSeq" id="YP_354088.1">
    <property type="nucleotide sequence ID" value="NC_007493.2"/>
</dbReference>
<dbReference type="SMR" id="Q3IZ47"/>
<dbReference type="STRING" id="272943.RSP_1004"/>
<dbReference type="EnsemblBacteria" id="ABA80187">
    <property type="protein sequence ID" value="ABA80187"/>
    <property type="gene ID" value="RSP_1004"/>
</dbReference>
<dbReference type="GeneID" id="67447776"/>
<dbReference type="KEGG" id="rsp:RSP_1004"/>
<dbReference type="PATRIC" id="fig|272943.9.peg.2976"/>
<dbReference type="eggNOG" id="COG0344">
    <property type="taxonomic scope" value="Bacteria"/>
</dbReference>
<dbReference type="OrthoDB" id="9777124at2"/>
<dbReference type="PhylomeDB" id="Q3IZ47"/>
<dbReference type="UniPathway" id="UPA00085"/>
<dbReference type="Proteomes" id="UP000002703">
    <property type="component" value="Chromosome 1"/>
</dbReference>
<dbReference type="GO" id="GO:0005886">
    <property type="term" value="C:plasma membrane"/>
    <property type="evidence" value="ECO:0007669"/>
    <property type="project" value="UniProtKB-SubCell"/>
</dbReference>
<dbReference type="GO" id="GO:0043772">
    <property type="term" value="F:acyl-phosphate glycerol-3-phosphate acyltransferase activity"/>
    <property type="evidence" value="ECO:0007669"/>
    <property type="project" value="UniProtKB-UniRule"/>
</dbReference>
<dbReference type="GO" id="GO:0008654">
    <property type="term" value="P:phospholipid biosynthetic process"/>
    <property type="evidence" value="ECO:0007669"/>
    <property type="project" value="UniProtKB-UniRule"/>
</dbReference>
<dbReference type="HAMAP" id="MF_01043">
    <property type="entry name" value="PlsY"/>
    <property type="match status" value="1"/>
</dbReference>
<dbReference type="InterPro" id="IPR003811">
    <property type="entry name" value="G3P_acylTferase_PlsY"/>
</dbReference>
<dbReference type="NCBIfam" id="TIGR00023">
    <property type="entry name" value="glycerol-3-phosphate 1-O-acyltransferase PlsY"/>
    <property type="match status" value="1"/>
</dbReference>
<dbReference type="PANTHER" id="PTHR30309:SF0">
    <property type="entry name" value="GLYCEROL-3-PHOSPHATE ACYLTRANSFERASE-RELATED"/>
    <property type="match status" value="1"/>
</dbReference>
<dbReference type="PANTHER" id="PTHR30309">
    <property type="entry name" value="INNER MEMBRANE PROTEIN YGIH"/>
    <property type="match status" value="1"/>
</dbReference>
<dbReference type="Pfam" id="PF02660">
    <property type="entry name" value="G3P_acyltransf"/>
    <property type="match status" value="1"/>
</dbReference>
<dbReference type="SMART" id="SM01207">
    <property type="entry name" value="G3P_acyltransf"/>
    <property type="match status" value="1"/>
</dbReference>
<reference key="1">
    <citation type="submission" date="2005-09" db="EMBL/GenBank/DDBJ databases">
        <title>Complete sequence of chromosome 1 of Rhodobacter sphaeroides 2.4.1.</title>
        <authorList>
            <person name="Copeland A."/>
            <person name="Lucas S."/>
            <person name="Lapidus A."/>
            <person name="Barry K."/>
            <person name="Detter J.C."/>
            <person name="Glavina T."/>
            <person name="Hammon N."/>
            <person name="Israni S."/>
            <person name="Pitluck S."/>
            <person name="Richardson P."/>
            <person name="Mackenzie C."/>
            <person name="Choudhary M."/>
            <person name="Larimer F."/>
            <person name="Hauser L.J."/>
            <person name="Land M."/>
            <person name="Donohue T.J."/>
            <person name="Kaplan S."/>
        </authorList>
    </citation>
    <scope>NUCLEOTIDE SEQUENCE [LARGE SCALE GENOMIC DNA]</scope>
    <source>
        <strain>ATCC 17023 / DSM 158 / JCM 6121 / CCUG 31486 / LMG 2827 / NBRC 12203 / NCIMB 8253 / ATH 2.4.1.</strain>
    </source>
</reference>
<accession>Q3IZ47</accession>
<evidence type="ECO:0000255" key="1">
    <source>
        <dbReference type="HAMAP-Rule" id="MF_01043"/>
    </source>
</evidence>
<keyword id="KW-0997">Cell inner membrane</keyword>
<keyword id="KW-1003">Cell membrane</keyword>
<keyword id="KW-0444">Lipid biosynthesis</keyword>
<keyword id="KW-0443">Lipid metabolism</keyword>
<keyword id="KW-0472">Membrane</keyword>
<keyword id="KW-0594">Phospholipid biosynthesis</keyword>
<keyword id="KW-1208">Phospholipid metabolism</keyword>
<keyword id="KW-1185">Reference proteome</keyword>
<keyword id="KW-0808">Transferase</keyword>
<keyword id="KW-0812">Transmembrane</keyword>
<keyword id="KW-1133">Transmembrane helix</keyword>